<sequence length="457" mass="49835">MSAGKIVQIIGAVIDVEFPQDAVPKVYDALKVESGLTLEVQQQLGGGVVRCIALGTSDGLKRGLKVENTNNPIQVPVGTKTLGRIMNVLGEPIDEQGAIGEEERWAIHRSAPSYEEQSNSTELLETGIKVIDLICPFAKGGKVGLFGGAGVGKTVNMMELIRNIAIEHSGYSVFAGVGERTREGNDFYHEMKDSNVLDKVSLVYGQMNEPPGNRLRVALTGLTMAEKFRDEGRDVLFFVDNIYRYTLAGTEVSALLGRMPSAVGYQPTLAEEMGVLQERITSTKTGSITSVQAVYVPADDLTDPSPATTFAHLDSTVVLSRQIASLGIYPAVDPLDSTSRQLDPLVVGQEHYDVARGVQGILQRYKELKDIIAILGMDELSEEDKLVVARARKIERFLSQPFFVAEVFTGSPGKYVTLKDTIRGFKGILDGEYDHIPEQAFYMVGSIDEVLEKAKNM</sequence>
<accession>Q4QN64</accession>
<feature type="chain" id="PRO_0000254272" description="ATP synthase subunit beta">
    <location>
        <begin position="1"/>
        <end position="457"/>
    </location>
</feature>
<feature type="binding site" evidence="1">
    <location>
        <begin position="147"/>
        <end position="154"/>
    </location>
    <ligand>
        <name>ATP</name>
        <dbReference type="ChEBI" id="CHEBI:30616"/>
    </ligand>
</feature>
<organism>
    <name type="scientific">Haemophilus influenzae (strain 86-028NP)</name>
    <dbReference type="NCBI Taxonomy" id="281310"/>
    <lineage>
        <taxon>Bacteria</taxon>
        <taxon>Pseudomonadati</taxon>
        <taxon>Pseudomonadota</taxon>
        <taxon>Gammaproteobacteria</taxon>
        <taxon>Pasteurellales</taxon>
        <taxon>Pasteurellaceae</taxon>
        <taxon>Haemophilus</taxon>
    </lineage>
</organism>
<dbReference type="EC" id="7.1.2.2" evidence="1"/>
<dbReference type="EMBL" id="CP000057">
    <property type="protein sequence ID" value="AAX87533.1"/>
    <property type="molecule type" value="Genomic_DNA"/>
</dbReference>
<dbReference type="RefSeq" id="WP_005649402.1">
    <property type="nucleotide sequence ID" value="NC_007146.2"/>
</dbReference>
<dbReference type="SMR" id="Q4QN64"/>
<dbReference type="GeneID" id="93219492"/>
<dbReference type="KEGG" id="hit:NTHI0609"/>
<dbReference type="HOGENOM" id="CLU_022398_0_2_6"/>
<dbReference type="Proteomes" id="UP000002525">
    <property type="component" value="Chromosome"/>
</dbReference>
<dbReference type="GO" id="GO:0005886">
    <property type="term" value="C:plasma membrane"/>
    <property type="evidence" value="ECO:0007669"/>
    <property type="project" value="UniProtKB-SubCell"/>
</dbReference>
<dbReference type="GO" id="GO:0045259">
    <property type="term" value="C:proton-transporting ATP synthase complex"/>
    <property type="evidence" value="ECO:0007669"/>
    <property type="project" value="UniProtKB-KW"/>
</dbReference>
<dbReference type="GO" id="GO:0005524">
    <property type="term" value="F:ATP binding"/>
    <property type="evidence" value="ECO:0007669"/>
    <property type="project" value="UniProtKB-UniRule"/>
</dbReference>
<dbReference type="GO" id="GO:0016887">
    <property type="term" value="F:ATP hydrolysis activity"/>
    <property type="evidence" value="ECO:0007669"/>
    <property type="project" value="InterPro"/>
</dbReference>
<dbReference type="GO" id="GO:0046933">
    <property type="term" value="F:proton-transporting ATP synthase activity, rotational mechanism"/>
    <property type="evidence" value="ECO:0007669"/>
    <property type="project" value="UniProtKB-UniRule"/>
</dbReference>
<dbReference type="CDD" id="cd18110">
    <property type="entry name" value="ATP-synt_F1_beta_C"/>
    <property type="match status" value="1"/>
</dbReference>
<dbReference type="CDD" id="cd18115">
    <property type="entry name" value="ATP-synt_F1_beta_N"/>
    <property type="match status" value="1"/>
</dbReference>
<dbReference type="CDD" id="cd01133">
    <property type="entry name" value="F1-ATPase_beta_CD"/>
    <property type="match status" value="1"/>
</dbReference>
<dbReference type="FunFam" id="1.10.1140.10:FF:000001">
    <property type="entry name" value="ATP synthase subunit beta"/>
    <property type="match status" value="1"/>
</dbReference>
<dbReference type="FunFam" id="2.40.10.170:FF:000003">
    <property type="entry name" value="ATP synthase subunit beta"/>
    <property type="match status" value="1"/>
</dbReference>
<dbReference type="FunFam" id="3.40.50.300:FF:000004">
    <property type="entry name" value="ATP synthase subunit beta"/>
    <property type="match status" value="1"/>
</dbReference>
<dbReference type="Gene3D" id="2.40.10.170">
    <property type="match status" value="1"/>
</dbReference>
<dbReference type="Gene3D" id="1.10.1140.10">
    <property type="entry name" value="Bovine Mitochondrial F1-atpase, Atp Synthase Beta Chain, Chain D, domain 3"/>
    <property type="match status" value="1"/>
</dbReference>
<dbReference type="Gene3D" id="3.40.50.300">
    <property type="entry name" value="P-loop containing nucleotide triphosphate hydrolases"/>
    <property type="match status" value="1"/>
</dbReference>
<dbReference type="HAMAP" id="MF_01347">
    <property type="entry name" value="ATP_synth_beta_bact"/>
    <property type="match status" value="1"/>
</dbReference>
<dbReference type="InterPro" id="IPR003593">
    <property type="entry name" value="AAA+_ATPase"/>
</dbReference>
<dbReference type="InterPro" id="IPR055190">
    <property type="entry name" value="ATP-synt_VA_C"/>
</dbReference>
<dbReference type="InterPro" id="IPR005722">
    <property type="entry name" value="ATP_synth_F1_bsu"/>
</dbReference>
<dbReference type="InterPro" id="IPR020003">
    <property type="entry name" value="ATPase_a/bsu_AS"/>
</dbReference>
<dbReference type="InterPro" id="IPR050053">
    <property type="entry name" value="ATPase_alpha/beta_chains"/>
</dbReference>
<dbReference type="InterPro" id="IPR004100">
    <property type="entry name" value="ATPase_F1/V1/A1_a/bsu_N"/>
</dbReference>
<dbReference type="InterPro" id="IPR036121">
    <property type="entry name" value="ATPase_F1/V1/A1_a/bsu_N_sf"/>
</dbReference>
<dbReference type="InterPro" id="IPR000194">
    <property type="entry name" value="ATPase_F1/V1/A1_a/bsu_nucl-bd"/>
</dbReference>
<dbReference type="InterPro" id="IPR024034">
    <property type="entry name" value="ATPase_F1/V1_b/a_C"/>
</dbReference>
<dbReference type="InterPro" id="IPR027417">
    <property type="entry name" value="P-loop_NTPase"/>
</dbReference>
<dbReference type="NCBIfam" id="TIGR01039">
    <property type="entry name" value="atpD"/>
    <property type="match status" value="1"/>
</dbReference>
<dbReference type="PANTHER" id="PTHR15184">
    <property type="entry name" value="ATP SYNTHASE"/>
    <property type="match status" value="1"/>
</dbReference>
<dbReference type="PANTHER" id="PTHR15184:SF71">
    <property type="entry name" value="ATP SYNTHASE SUBUNIT BETA, MITOCHONDRIAL"/>
    <property type="match status" value="1"/>
</dbReference>
<dbReference type="Pfam" id="PF00006">
    <property type="entry name" value="ATP-synt_ab"/>
    <property type="match status" value="1"/>
</dbReference>
<dbReference type="Pfam" id="PF02874">
    <property type="entry name" value="ATP-synt_ab_N"/>
    <property type="match status" value="1"/>
</dbReference>
<dbReference type="Pfam" id="PF22919">
    <property type="entry name" value="ATP-synt_VA_C"/>
    <property type="match status" value="1"/>
</dbReference>
<dbReference type="SMART" id="SM00382">
    <property type="entry name" value="AAA"/>
    <property type="match status" value="1"/>
</dbReference>
<dbReference type="SUPFAM" id="SSF47917">
    <property type="entry name" value="C-terminal domain of alpha and beta subunits of F1 ATP synthase"/>
    <property type="match status" value="1"/>
</dbReference>
<dbReference type="SUPFAM" id="SSF50615">
    <property type="entry name" value="N-terminal domain of alpha and beta subunits of F1 ATP synthase"/>
    <property type="match status" value="1"/>
</dbReference>
<dbReference type="SUPFAM" id="SSF52540">
    <property type="entry name" value="P-loop containing nucleoside triphosphate hydrolases"/>
    <property type="match status" value="1"/>
</dbReference>
<dbReference type="PROSITE" id="PS00152">
    <property type="entry name" value="ATPASE_ALPHA_BETA"/>
    <property type="match status" value="1"/>
</dbReference>
<comment type="function">
    <text evidence="1">Produces ATP from ADP in the presence of a proton gradient across the membrane. The catalytic sites are hosted primarily by the beta subunits.</text>
</comment>
<comment type="catalytic activity">
    <reaction evidence="1">
        <text>ATP + H2O + 4 H(+)(in) = ADP + phosphate + 5 H(+)(out)</text>
        <dbReference type="Rhea" id="RHEA:57720"/>
        <dbReference type="ChEBI" id="CHEBI:15377"/>
        <dbReference type="ChEBI" id="CHEBI:15378"/>
        <dbReference type="ChEBI" id="CHEBI:30616"/>
        <dbReference type="ChEBI" id="CHEBI:43474"/>
        <dbReference type="ChEBI" id="CHEBI:456216"/>
        <dbReference type="EC" id="7.1.2.2"/>
    </reaction>
</comment>
<comment type="subunit">
    <text evidence="1">F-type ATPases have 2 components, CF(1) - the catalytic core - and CF(0) - the membrane proton channel. CF(1) has five subunits: alpha(3), beta(3), gamma(1), delta(1), epsilon(1). CF(0) has three main subunits: a(1), b(2) and c(9-12). The alpha and beta chains form an alternating ring which encloses part of the gamma chain. CF(1) is attached to CF(0) by a central stalk formed by the gamma and epsilon chains, while a peripheral stalk is formed by the delta and b chains.</text>
</comment>
<comment type="subcellular location">
    <subcellularLocation>
        <location evidence="1">Cell inner membrane</location>
        <topology evidence="1">Peripheral membrane protein</topology>
    </subcellularLocation>
</comment>
<comment type="similarity">
    <text evidence="1">Belongs to the ATPase alpha/beta chains family.</text>
</comment>
<keyword id="KW-0066">ATP synthesis</keyword>
<keyword id="KW-0067">ATP-binding</keyword>
<keyword id="KW-0997">Cell inner membrane</keyword>
<keyword id="KW-1003">Cell membrane</keyword>
<keyword id="KW-0139">CF(1)</keyword>
<keyword id="KW-0375">Hydrogen ion transport</keyword>
<keyword id="KW-0406">Ion transport</keyword>
<keyword id="KW-0472">Membrane</keyword>
<keyword id="KW-0547">Nucleotide-binding</keyword>
<keyword id="KW-1278">Translocase</keyword>
<keyword id="KW-0813">Transport</keyword>
<reference key="1">
    <citation type="journal article" date="2005" name="J. Bacteriol.">
        <title>Genomic sequence of an otitis media isolate of nontypeable Haemophilus influenzae: comparative study with H. influenzae serotype d, strain KW20.</title>
        <authorList>
            <person name="Harrison A."/>
            <person name="Dyer D.W."/>
            <person name="Gillaspy A."/>
            <person name="Ray W.C."/>
            <person name="Mungur R."/>
            <person name="Carson M.B."/>
            <person name="Zhong H."/>
            <person name="Gipson J."/>
            <person name="Gipson M."/>
            <person name="Johnson L.S."/>
            <person name="Lewis L."/>
            <person name="Bakaletz L.O."/>
            <person name="Munson R.S. Jr."/>
        </authorList>
    </citation>
    <scope>NUCLEOTIDE SEQUENCE [LARGE SCALE GENOMIC DNA]</scope>
    <source>
        <strain>86-028NP</strain>
    </source>
</reference>
<protein>
    <recommendedName>
        <fullName evidence="1">ATP synthase subunit beta</fullName>
        <ecNumber evidence="1">7.1.2.2</ecNumber>
    </recommendedName>
    <alternativeName>
        <fullName evidence="1">ATP synthase F1 sector subunit beta</fullName>
    </alternativeName>
    <alternativeName>
        <fullName evidence="1">F-ATPase subunit beta</fullName>
    </alternativeName>
</protein>
<evidence type="ECO:0000255" key="1">
    <source>
        <dbReference type="HAMAP-Rule" id="MF_01347"/>
    </source>
</evidence>
<name>ATPB_HAEI8</name>
<proteinExistence type="inferred from homology"/>
<gene>
    <name evidence="1" type="primary">atpD</name>
    <name type="ordered locus">NTHI0609</name>
</gene>